<keyword id="KW-0963">Cytoplasm</keyword>
<keyword id="KW-0210">Decarboxylase</keyword>
<keyword id="KW-0456">Lyase</keyword>
<keyword id="KW-0627">Porphyrin biosynthesis</keyword>
<gene>
    <name evidence="1" type="primary">hemE</name>
    <name type="ordered locus">A1G_07520</name>
</gene>
<feature type="chain" id="PRO_1000023962" description="Uroporphyrinogen decarboxylase">
    <location>
        <begin position="1"/>
        <end position="346"/>
    </location>
</feature>
<feature type="binding site" evidence="1">
    <location>
        <begin position="21"/>
        <end position="25"/>
    </location>
    <ligand>
        <name>substrate</name>
    </ligand>
</feature>
<feature type="binding site" evidence="1">
    <location>
        <position position="71"/>
    </location>
    <ligand>
        <name>substrate</name>
    </ligand>
</feature>
<feature type="binding site" evidence="1">
    <location>
        <position position="146"/>
    </location>
    <ligand>
        <name>substrate</name>
    </ligand>
</feature>
<feature type="binding site" evidence="1">
    <location>
        <position position="201"/>
    </location>
    <ligand>
        <name>substrate</name>
    </ligand>
</feature>
<feature type="binding site" evidence="1">
    <location>
        <position position="316"/>
    </location>
    <ligand>
        <name>substrate</name>
    </ligand>
</feature>
<feature type="site" description="Transition state stabilizer" evidence="1">
    <location>
        <position position="71"/>
    </location>
</feature>
<accession>A8GU66</accession>
<proteinExistence type="inferred from homology"/>
<protein>
    <recommendedName>
        <fullName evidence="1">Uroporphyrinogen decarboxylase</fullName>
        <shortName evidence="1">UPD</shortName>
        <shortName evidence="1">URO-D</shortName>
        <ecNumber evidence="1">4.1.1.37</ecNumber>
    </recommendedName>
</protein>
<comment type="function">
    <text evidence="1">Catalyzes the decarboxylation of four acetate groups of uroporphyrinogen-III to yield coproporphyrinogen-III.</text>
</comment>
<comment type="catalytic activity">
    <reaction evidence="1">
        <text>uroporphyrinogen III + 4 H(+) = coproporphyrinogen III + 4 CO2</text>
        <dbReference type="Rhea" id="RHEA:19865"/>
        <dbReference type="ChEBI" id="CHEBI:15378"/>
        <dbReference type="ChEBI" id="CHEBI:16526"/>
        <dbReference type="ChEBI" id="CHEBI:57308"/>
        <dbReference type="ChEBI" id="CHEBI:57309"/>
        <dbReference type="EC" id="4.1.1.37"/>
    </reaction>
</comment>
<comment type="pathway">
    <text evidence="1">Porphyrin-containing compound metabolism; protoporphyrin-IX biosynthesis; coproporphyrinogen-III from 5-aminolevulinate: step 4/4.</text>
</comment>
<comment type="subunit">
    <text evidence="1">Homodimer.</text>
</comment>
<comment type="subcellular location">
    <subcellularLocation>
        <location evidence="1">Cytoplasm</location>
    </subcellularLocation>
</comment>
<comment type="similarity">
    <text evidence="1">Belongs to the uroporphyrinogen decarboxylase family.</text>
</comment>
<sequence>MKQIINPLKGNNDKVPIWFMRQAGRYLPEYKKVRETTKNFLDFCYDVSKATEVTLQPIKRYGFDAAIIFSDILVLPHALGWEVDFKENIGPILKQFKSQEDFKYLQINPNYKLEKVYEIIKKVKKELPSPISLIGFAGSPWTVMSYMLEGKGKQDFKTSKKFIYENKILAEELLNFITEKTADHLINQAKSGADVLKLFDSWSGVLAEEEFTKFVIEPTKKIILKVKEVFPKTPIIAFPKGAGLLYEKFIKEVPIDVLAVDQMVPLEKMKEWSDKVIVQGNLDPVVLLTNKEIIKEKTYKILQAMKGKNFIFNLGHGILPETPTENVEFLTEYVRLYEEKNSNSTF</sequence>
<dbReference type="EC" id="4.1.1.37" evidence="1"/>
<dbReference type="EMBL" id="CP000848">
    <property type="protein sequence ID" value="ABV76941.1"/>
    <property type="molecule type" value="Genomic_DNA"/>
</dbReference>
<dbReference type="RefSeq" id="WP_012151475.1">
    <property type="nucleotide sequence ID" value="NZ_CP121767.1"/>
</dbReference>
<dbReference type="SMR" id="A8GU66"/>
<dbReference type="GeneID" id="79937962"/>
<dbReference type="KEGG" id="rri:A1G_07520"/>
<dbReference type="HOGENOM" id="CLU_040933_0_0_5"/>
<dbReference type="UniPathway" id="UPA00251">
    <property type="reaction ID" value="UER00321"/>
</dbReference>
<dbReference type="Proteomes" id="UP000006832">
    <property type="component" value="Chromosome"/>
</dbReference>
<dbReference type="GO" id="GO:0005829">
    <property type="term" value="C:cytosol"/>
    <property type="evidence" value="ECO:0007669"/>
    <property type="project" value="TreeGrafter"/>
</dbReference>
<dbReference type="GO" id="GO:0004853">
    <property type="term" value="F:uroporphyrinogen decarboxylase activity"/>
    <property type="evidence" value="ECO:0007669"/>
    <property type="project" value="UniProtKB-UniRule"/>
</dbReference>
<dbReference type="GO" id="GO:0006782">
    <property type="term" value="P:protoporphyrinogen IX biosynthetic process"/>
    <property type="evidence" value="ECO:0007669"/>
    <property type="project" value="UniProtKB-UniRule"/>
</dbReference>
<dbReference type="CDD" id="cd00717">
    <property type="entry name" value="URO-D"/>
    <property type="match status" value="1"/>
</dbReference>
<dbReference type="FunFam" id="3.20.20.210:FF:000007">
    <property type="entry name" value="Uroporphyrinogen decarboxylase"/>
    <property type="match status" value="1"/>
</dbReference>
<dbReference type="Gene3D" id="3.20.20.210">
    <property type="match status" value="1"/>
</dbReference>
<dbReference type="HAMAP" id="MF_00218">
    <property type="entry name" value="URO_D"/>
    <property type="match status" value="1"/>
</dbReference>
<dbReference type="InterPro" id="IPR038071">
    <property type="entry name" value="UROD/MetE-like_sf"/>
</dbReference>
<dbReference type="InterPro" id="IPR006361">
    <property type="entry name" value="Uroporphyrinogen_deCO2ase_HemE"/>
</dbReference>
<dbReference type="InterPro" id="IPR000257">
    <property type="entry name" value="Uroporphyrinogen_deCOase"/>
</dbReference>
<dbReference type="NCBIfam" id="TIGR01464">
    <property type="entry name" value="hemE"/>
    <property type="match status" value="1"/>
</dbReference>
<dbReference type="PANTHER" id="PTHR21091">
    <property type="entry name" value="METHYLTETRAHYDROFOLATE:HOMOCYSTEINE METHYLTRANSFERASE RELATED"/>
    <property type="match status" value="1"/>
</dbReference>
<dbReference type="PANTHER" id="PTHR21091:SF169">
    <property type="entry name" value="UROPORPHYRINOGEN DECARBOXYLASE"/>
    <property type="match status" value="1"/>
</dbReference>
<dbReference type="Pfam" id="PF01208">
    <property type="entry name" value="URO-D"/>
    <property type="match status" value="1"/>
</dbReference>
<dbReference type="SUPFAM" id="SSF51726">
    <property type="entry name" value="UROD/MetE-like"/>
    <property type="match status" value="1"/>
</dbReference>
<dbReference type="PROSITE" id="PS00906">
    <property type="entry name" value="UROD_1"/>
    <property type="match status" value="1"/>
</dbReference>
<dbReference type="PROSITE" id="PS00907">
    <property type="entry name" value="UROD_2"/>
    <property type="match status" value="1"/>
</dbReference>
<reference key="1">
    <citation type="submission" date="2007-09" db="EMBL/GenBank/DDBJ databases">
        <title>Complete genome sequence of Rickettsia rickettsii.</title>
        <authorList>
            <person name="Madan A."/>
            <person name="Fahey J."/>
            <person name="Helton E."/>
            <person name="Ketteman M."/>
            <person name="Madan A."/>
            <person name="Rodrigues S."/>
            <person name="Sanchez A."/>
            <person name="Dasch G."/>
            <person name="Eremeeva M."/>
        </authorList>
    </citation>
    <scope>NUCLEOTIDE SEQUENCE [LARGE SCALE GENOMIC DNA]</scope>
    <source>
        <strain>Sheila Smith</strain>
    </source>
</reference>
<name>DCUP_RICRS</name>
<evidence type="ECO:0000255" key="1">
    <source>
        <dbReference type="HAMAP-Rule" id="MF_00218"/>
    </source>
</evidence>
<organism>
    <name type="scientific">Rickettsia rickettsii (strain Sheila Smith)</name>
    <dbReference type="NCBI Taxonomy" id="392021"/>
    <lineage>
        <taxon>Bacteria</taxon>
        <taxon>Pseudomonadati</taxon>
        <taxon>Pseudomonadota</taxon>
        <taxon>Alphaproteobacteria</taxon>
        <taxon>Rickettsiales</taxon>
        <taxon>Rickettsiaceae</taxon>
        <taxon>Rickettsieae</taxon>
        <taxon>Rickettsia</taxon>
        <taxon>spotted fever group</taxon>
    </lineage>
</organism>